<gene>
    <name evidence="1" type="primary">mdh</name>
    <name type="ordered locus">Bphyt_6858</name>
</gene>
<dbReference type="EC" id="1.1.1.37" evidence="1"/>
<dbReference type="EMBL" id="CP001053">
    <property type="protein sequence ID" value="ACD21150.1"/>
    <property type="molecule type" value="Genomic_DNA"/>
</dbReference>
<dbReference type="RefSeq" id="WP_012428649.1">
    <property type="nucleotide sequence ID" value="NC_010676.1"/>
</dbReference>
<dbReference type="SMR" id="B2T9P8"/>
<dbReference type="STRING" id="398527.Bphyt_6858"/>
<dbReference type="KEGG" id="bpy:Bphyt_6858"/>
<dbReference type="eggNOG" id="COG0039">
    <property type="taxonomic scope" value="Bacteria"/>
</dbReference>
<dbReference type="HOGENOM" id="CLU_040727_2_0_4"/>
<dbReference type="OrthoDB" id="9802969at2"/>
<dbReference type="Proteomes" id="UP000001739">
    <property type="component" value="Chromosome 2"/>
</dbReference>
<dbReference type="GO" id="GO:0030060">
    <property type="term" value="F:L-malate dehydrogenase (NAD+) activity"/>
    <property type="evidence" value="ECO:0007669"/>
    <property type="project" value="UniProtKB-UniRule"/>
</dbReference>
<dbReference type="GO" id="GO:0006108">
    <property type="term" value="P:malate metabolic process"/>
    <property type="evidence" value="ECO:0007669"/>
    <property type="project" value="InterPro"/>
</dbReference>
<dbReference type="GO" id="GO:0006099">
    <property type="term" value="P:tricarboxylic acid cycle"/>
    <property type="evidence" value="ECO:0007669"/>
    <property type="project" value="UniProtKB-UniRule"/>
</dbReference>
<dbReference type="CDD" id="cd01338">
    <property type="entry name" value="MDH_chloroplast-like"/>
    <property type="match status" value="1"/>
</dbReference>
<dbReference type="FunFam" id="3.40.50.720:FF:000010">
    <property type="entry name" value="Malate dehydrogenase"/>
    <property type="match status" value="1"/>
</dbReference>
<dbReference type="FunFam" id="3.90.110.10:FF:000002">
    <property type="entry name" value="Malate dehydrogenase"/>
    <property type="match status" value="1"/>
</dbReference>
<dbReference type="Gene3D" id="3.90.110.10">
    <property type="entry name" value="Lactate dehydrogenase/glycoside hydrolase, family 4, C-terminal"/>
    <property type="match status" value="1"/>
</dbReference>
<dbReference type="Gene3D" id="3.40.50.720">
    <property type="entry name" value="NAD(P)-binding Rossmann-like Domain"/>
    <property type="match status" value="1"/>
</dbReference>
<dbReference type="HAMAP" id="MF_01517">
    <property type="entry name" value="Malate_dehydrog_2"/>
    <property type="match status" value="1"/>
</dbReference>
<dbReference type="InterPro" id="IPR001557">
    <property type="entry name" value="L-lactate/malate_DH"/>
</dbReference>
<dbReference type="InterPro" id="IPR022383">
    <property type="entry name" value="Lactate/malate_DH_C"/>
</dbReference>
<dbReference type="InterPro" id="IPR001236">
    <property type="entry name" value="Lactate/malate_DH_N"/>
</dbReference>
<dbReference type="InterPro" id="IPR015955">
    <property type="entry name" value="Lactate_DH/Glyco_Ohase_4_C"/>
</dbReference>
<dbReference type="InterPro" id="IPR010945">
    <property type="entry name" value="Malate_DH_type2"/>
</dbReference>
<dbReference type="InterPro" id="IPR036291">
    <property type="entry name" value="NAD(P)-bd_dom_sf"/>
</dbReference>
<dbReference type="NCBIfam" id="TIGR01759">
    <property type="entry name" value="MalateDH-SF1"/>
    <property type="match status" value="1"/>
</dbReference>
<dbReference type="NCBIfam" id="NF003916">
    <property type="entry name" value="PRK05442.1"/>
    <property type="match status" value="1"/>
</dbReference>
<dbReference type="PANTHER" id="PTHR23382">
    <property type="entry name" value="MALATE DEHYDROGENASE"/>
    <property type="match status" value="1"/>
</dbReference>
<dbReference type="Pfam" id="PF02866">
    <property type="entry name" value="Ldh_1_C"/>
    <property type="match status" value="1"/>
</dbReference>
<dbReference type="Pfam" id="PF00056">
    <property type="entry name" value="Ldh_1_N"/>
    <property type="match status" value="1"/>
</dbReference>
<dbReference type="PIRSF" id="PIRSF000102">
    <property type="entry name" value="Lac_mal_DH"/>
    <property type="match status" value="1"/>
</dbReference>
<dbReference type="SUPFAM" id="SSF56327">
    <property type="entry name" value="LDH C-terminal domain-like"/>
    <property type="match status" value="1"/>
</dbReference>
<dbReference type="SUPFAM" id="SSF51735">
    <property type="entry name" value="NAD(P)-binding Rossmann-fold domains"/>
    <property type="match status" value="1"/>
</dbReference>
<organism>
    <name type="scientific">Paraburkholderia phytofirmans (strain DSM 17436 / LMG 22146 / PsJN)</name>
    <name type="common">Burkholderia phytofirmans</name>
    <dbReference type="NCBI Taxonomy" id="398527"/>
    <lineage>
        <taxon>Bacteria</taxon>
        <taxon>Pseudomonadati</taxon>
        <taxon>Pseudomonadota</taxon>
        <taxon>Betaproteobacteria</taxon>
        <taxon>Burkholderiales</taxon>
        <taxon>Burkholderiaceae</taxon>
        <taxon>Paraburkholderia</taxon>
    </lineage>
</organism>
<feature type="chain" id="PRO_1000191614" description="Malate dehydrogenase">
    <location>
        <begin position="1"/>
        <end position="327"/>
    </location>
</feature>
<feature type="active site" description="Proton acceptor" evidence="1">
    <location>
        <position position="188"/>
    </location>
</feature>
<feature type="binding site" evidence="1">
    <location>
        <begin position="12"/>
        <end position="18"/>
    </location>
    <ligand>
        <name>NAD(+)</name>
        <dbReference type="ChEBI" id="CHEBI:57540"/>
    </ligand>
</feature>
<feature type="binding site" evidence="1">
    <location>
        <position position="93"/>
    </location>
    <ligand>
        <name>substrate</name>
    </ligand>
</feature>
<feature type="binding site" evidence="1">
    <location>
        <position position="99"/>
    </location>
    <ligand>
        <name>substrate</name>
    </ligand>
</feature>
<feature type="binding site" evidence="1">
    <location>
        <position position="106"/>
    </location>
    <ligand>
        <name>NAD(+)</name>
        <dbReference type="ChEBI" id="CHEBI:57540"/>
    </ligand>
</feature>
<feature type="binding site" evidence="1">
    <location>
        <position position="113"/>
    </location>
    <ligand>
        <name>NAD(+)</name>
        <dbReference type="ChEBI" id="CHEBI:57540"/>
    </ligand>
</feature>
<feature type="binding site" evidence="1">
    <location>
        <begin position="130"/>
        <end position="132"/>
    </location>
    <ligand>
        <name>NAD(+)</name>
        <dbReference type="ChEBI" id="CHEBI:57540"/>
    </ligand>
</feature>
<feature type="binding site" evidence="1">
    <location>
        <position position="132"/>
    </location>
    <ligand>
        <name>substrate</name>
    </ligand>
</feature>
<feature type="binding site" evidence="1">
    <location>
        <position position="163"/>
    </location>
    <ligand>
        <name>substrate</name>
    </ligand>
</feature>
<evidence type="ECO:0000255" key="1">
    <source>
        <dbReference type="HAMAP-Rule" id="MF_01517"/>
    </source>
</evidence>
<proteinExistence type="inferred from homology"/>
<accession>B2T9P8</accession>
<comment type="function">
    <text evidence="1">Catalyzes the reversible oxidation of malate to oxaloacetate.</text>
</comment>
<comment type="catalytic activity">
    <reaction evidence="1">
        <text>(S)-malate + NAD(+) = oxaloacetate + NADH + H(+)</text>
        <dbReference type="Rhea" id="RHEA:21432"/>
        <dbReference type="ChEBI" id="CHEBI:15378"/>
        <dbReference type="ChEBI" id="CHEBI:15589"/>
        <dbReference type="ChEBI" id="CHEBI:16452"/>
        <dbReference type="ChEBI" id="CHEBI:57540"/>
        <dbReference type="ChEBI" id="CHEBI:57945"/>
        <dbReference type="EC" id="1.1.1.37"/>
    </reaction>
</comment>
<comment type="similarity">
    <text evidence="1">Belongs to the LDH/MDH superfamily. MDH type 2 family.</text>
</comment>
<protein>
    <recommendedName>
        <fullName evidence="1">Malate dehydrogenase</fullName>
        <ecNumber evidence="1">1.1.1.37</ecNumber>
    </recommendedName>
</protein>
<sequence length="327" mass="35149">MAKPAKRVAVTGAAGQIAYSLLFRIANGDLLGKDQPVILQLLDLPQAQGAVKGVVMELDDCAFPLLSGVVITDDPEVAFKDADVALLVGARPRSKGMERKDLLSANAEIFTVQGKALNKVASRDVKVLVVGNPANTNAYIAMKSAPDLPKKNFTAMLRLDHNRALSQLAAKSGKPVASIEKLAVWGNHSPTMYPDFRFATAEGQDLTKLINDDEWNRNTFIPTVGKRGAAIIEARGLSSAASAANAAIDHVRDWVLGTNGKWVTMGIPSDGSYGIPEDIIYGVPVTCENGEYKRVEGLEIDAFSREKMDGTLNELLEEREGVQHLLG</sequence>
<name>MDH_PARPJ</name>
<reference key="1">
    <citation type="journal article" date="2011" name="J. Bacteriol.">
        <title>Complete genome sequence of the plant growth-promoting endophyte Burkholderia phytofirmans strain PsJN.</title>
        <authorList>
            <person name="Weilharter A."/>
            <person name="Mitter B."/>
            <person name="Shin M.V."/>
            <person name="Chain P.S."/>
            <person name="Nowak J."/>
            <person name="Sessitsch A."/>
        </authorList>
    </citation>
    <scope>NUCLEOTIDE SEQUENCE [LARGE SCALE GENOMIC DNA]</scope>
    <source>
        <strain>DSM 17436 / LMG 22146 / PsJN</strain>
    </source>
</reference>
<keyword id="KW-0520">NAD</keyword>
<keyword id="KW-0560">Oxidoreductase</keyword>
<keyword id="KW-0816">Tricarboxylic acid cycle</keyword>